<protein>
    <recommendedName>
        <fullName>Accessory gland protein Acp36DE</fullName>
    </recommendedName>
</protein>
<comment type="function">
    <text evidence="2 4">Responsible for physiological and behavioral changes in mated female flies. Associates with sperm and localizes to specific regions of the female reproductive tract, including the sperm storage organs. It accelerates sperm accumulation into storage but does not mediate the entry of the first sperm into storage. Once sperm storage has initiated it seems to act as a guidance factor helping subsequent sperm move into storage, a corral concentrating sperm around the SSO entrances and/or a trigger for responses within the female that accelerate storage of sperm.</text>
</comment>
<comment type="subcellular location">
    <subcellularLocation>
        <location evidence="5">Secreted</location>
    </subcellularLocation>
</comment>
<comment type="tissue specificity">
    <text evidence="3 4">Detected in the male accessory glands (at protein level) (PubMed:24514904). Produced in the accessory glands and secreted into seminal fluid (PubMed:9474779).</text>
</comment>
<comment type="PTM">
    <text evidence="3">Proteolytically cleaved by the seminal metalloprotease Semp1 (PubMed:24514904). Cleavage appears to take place in the mated female (PubMed:24514904).</text>
</comment>
<feature type="signal peptide" evidence="5">
    <location>
        <begin position="1"/>
        <end position="23"/>
    </location>
</feature>
<feature type="chain" id="PRO_0000020583" description="Accessory gland protein Acp36DE">
    <location>
        <begin position="24"/>
        <end position="912"/>
    </location>
</feature>
<feature type="region of interest" description="Disordered" evidence="1">
    <location>
        <begin position="193"/>
        <end position="255"/>
    </location>
</feature>
<feature type="region of interest" description="Disordered" evidence="1">
    <location>
        <begin position="271"/>
        <end position="349"/>
    </location>
</feature>
<feature type="region of interest" description="Disordered" evidence="1">
    <location>
        <begin position="518"/>
        <end position="544"/>
    </location>
</feature>
<feature type="region of interest" description="Disordered" evidence="1">
    <location>
        <begin position="638"/>
        <end position="671"/>
    </location>
</feature>
<feature type="region of interest" description="Disordered" evidence="1">
    <location>
        <begin position="732"/>
        <end position="912"/>
    </location>
</feature>
<feature type="compositionally biased region" description="Low complexity" evidence="1">
    <location>
        <begin position="193"/>
        <end position="220"/>
    </location>
</feature>
<feature type="compositionally biased region" description="Low complexity" evidence="1">
    <location>
        <begin position="230"/>
        <end position="255"/>
    </location>
</feature>
<feature type="compositionally biased region" description="Low complexity" evidence="1">
    <location>
        <begin position="271"/>
        <end position="324"/>
    </location>
</feature>
<feature type="compositionally biased region" description="Low complexity" evidence="1">
    <location>
        <begin position="521"/>
        <end position="544"/>
    </location>
</feature>
<feature type="compositionally biased region" description="Low complexity" evidence="1">
    <location>
        <begin position="732"/>
        <end position="757"/>
    </location>
</feature>
<feature type="compositionally biased region" description="Low complexity" evidence="1">
    <location>
        <begin position="765"/>
        <end position="785"/>
    </location>
</feature>
<feature type="compositionally biased region" description="Basic and acidic residues" evidence="1">
    <location>
        <begin position="803"/>
        <end position="818"/>
    </location>
</feature>
<feature type="compositionally biased region" description="Low complexity" evidence="1">
    <location>
        <begin position="821"/>
        <end position="845"/>
    </location>
</feature>
<feature type="compositionally biased region" description="Polar residues" evidence="1">
    <location>
        <begin position="851"/>
        <end position="861"/>
    </location>
</feature>
<feature type="compositionally biased region" description="Low complexity" evidence="1">
    <location>
        <begin position="862"/>
        <end position="897"/>
    </location>
</feature>
<feature type="compositionally biased region" description="Polar residues" evidence="1">
    <location>
        <begin position="898"/>
        <end position="912"/>
    </location>
</feature>
<feature type="sequence variant" description="In strain: WSII16." evidence="5">
    <original>N</original>
    <variation>S</variation>
    <location>
        <position position="148"/>
    </location>
</feature>
<feature type="sequence variant" description="In strain: WSII16." evidence="5">
    <original>A</original>
    <variation>V</variation>
    <location>
        <position position="190"/>
    </location>
</feature>
<feature type="sequence variant" description="In strain: SENGWA2, SENGWA22, SENGWA29, SENGWA32, SENGWA37, SENGWA51, WSII19 and WSII49." evidence="5">
    <original>T</original>
    <variation>S</variation>
    <location>
        <position position="198"/>
    </location>
</feature>
<feature type="sequence variant" description="In strain: SENGWA22." evidence="5">
    <location>
        <position position="223"/>
    </location>
</feature>
<feature type="sequence variant" description="In strain: WSII6." evidence="5">
    <original>E</original>
    <variation>G</variation>
    <location>
        <position position="231"/>
    </location>
</feature>
<feature type="sequence variant" description="In strain: SENGWA2, SENGWA29, SENGWA32, SENGWA51, WSII19 and WSII49." evidence="5">
    <original>Q</original>
    <variation>QSQ</variation>
    <location>
        <position position="253"/>
    </location>
</feature>
<feature type="sequence variant" description="In strain: WSII6." evidence="5">
    <original>E</original>
    <variation>G</variation>
    <location>
        <position position="307"/>
    </location>
</feature>
<feature type="sequence variant" description="In strain: WSII16." evidence="5">
    <original>I</original>
    <variation>F</variation>
    <location>
        <position position="316"/>
    </location>
</feature>
<feature type="sequence variant" description="In strain: SENGWA37." evidence="5">
    <original>K</original>
    <variation>T</variation>
    <location>
        <position position="325"/>
    </location>
</feature>
<feature type="sequence variant" description="In strain: SENGWA30." evidence="5">
    <original>S</original>
    <variation>P</variation>
    <location>
        <position position="335"/>
    </location>
</feature>
<feature type="sequence variant" description="In strain: SENGWA2, SENGWA22, SENGWA29, SENGWA30, SENGWA32, SENGWA37, SENGWA51, WSII16, WSII19 and WSII49." evidence="5">
    <original>Q</original>
    <variation>QLLREAQQK</variation>
    <location>
        <position position="352"/>
    </location>
</feature>
<feature type="sequence variant" description="In strain: WSII1." evidence="5">
    <original>F</original>
    <variation>HQN</variation>
    <location>
        <position position="385"/>
    </location>
</feature>
<feature type="sequence variant" description="In strain: WSII16." evidence="5">
    <original>V</original>
    <variation>I</variation>
    <location>
        <position position="430"/>
    </location>
</feature>
<feature type="sequence variant" description="In strain: Canton-S, SENGWA2, SENGWA22, SENGWA29, SENGWA32 and SENGWA51.">
    <original>L</original>
    <variation>F</variation>
    <location>
        <position position="464"/>
    </location>
</feature>
<feature type="sequence variant" description="In strain: WSII6." evidence="5">
    <original>E</original>
    <variation>G</variation>
    <location>
        <position position="496"/>
    </location>
</feature>
<feature type="sequence variant" description="In strain: SENGWA22, SENGWA29, SENGWA37 and SENGWA51." evidence="5">
    <original>L</original>
    <variation>V</variation>
    <location>
        <position position="507"/>
    </location>
</feature>
<feature type="sequence variant" description="In strain: WSII16." evidence="5">
    <original>L</original>
    <variation>Q</variation>
    <location>
        <position position="575"/>
    </location>
</feature>
<feature type="sequence variant" description="In strain: WSII26 and WSII49." evidence="5">
    <original>S</original>
    <variation>I</variation>
    <location>
        <position position="601"/>
    </location>
</feature>
<feature type="sequence variant" description="In strain: SENGWA30." evidence="5">
    <original>E</original>
    <variation>K</variation>
    <location>
        <position position="613"/>
    </location>
</feature>
<feature type="sequence variant" description="In strain: SENGWA22, SENGWA30 and WSII16." evidence="5">
    <original>P</original>
    <variation>A</variation>
    <location>
        <position position="650"/>
    </location>
</feature>
<feature type="sequence variant" description="In strain: SENGWA29, SENGWA30, SENGWA37 and SENGWA51." evidence="5">
    <original>L</original>
    <variation>V</variation>
    <location>
        <position position="666"/>
    </location>
</feature>
<feature type="sequence variant" description="In strain: SENGWA29, SENGWA30, SENGWA37 and SENGWA51." evidence="5">
    <original>G</original>
    <variation>E</variation>
    <location>
        <position position="670"/>
    </location>
</feature>
<feature type="sequence variant" description="In strain: SENGWA37 and SENGWA51." evidence="5">
    <original>T</original>
    <variation>A</variation>
    <location>
        <position position="758"/>
    </location>
</feature>
<feature type="sequence variant" description="In strain: SENGWA37 and SENGWA51." evidence="5">
    <location>
        <begin position="782"/>
        <end position="786"/>
    </location>
</feature>
<feature type="sequence variant" description="In strain: WSII26." evidence="5">
    <original>Q</original>
    <variation>E</variation>
    <location>
        <position position="830"/>
    </location>
</feature>
<feature type="sequence variant" description="In strain: WSII16." evidence="5">
    <original>Q</original>
    <variation>R</variation>
    <location>
        <position position="844"/>
    </location>
</feature>
<reference evidence="5" key="1">
    <citation type="journal article" date="1997" name="Insect Biochem. Mol. Biol.">
        <title>New genes for male accessory gland proteins in Drosophila melanogaster.</title>
        <authorList>
            <person name="Wolfner M.F."/>
            <person name="Harada H.A."/>
            <person name="Bertram M.J."/>
            <person name="Stelick T.J."/>
            <person name="Kraus K.W."/>
            <person name="Kalb J.M."/>
            <person name="Lung Y.O."/>
            <person name="Neubaum D.M."/>
            <person name="Park M."/>
            <person name="Tram U.K."/>
        </authorList>
    </citation>
    <scope>NUCLEOTIDE SEQUENCE</scope>
    <scope>FUNCTION</scope>
    <scope>TISSUE SPECIFICITY</scope>
    <source>
        <strain>Canton-S</strain>
        <tissue>Male accessory gland</tissue>
    </source>
</reference>
<reference evidence="5 7" key="2">
    <citation type="submission" date="1999-06" db="EMBL/GenBank/DDBJ databases">
        <authorList>
            <person name="Wolfner M.F."/>
            <person name="Harada H.A."/>
            <person name="Bertram M.J."/>
            <person name="Stelick T.J."/>
            <person name="Kraus K.W."/>
            <person name="Kalb J.M."/>
            <person name="Lung Y.O."/>
            <person name="Neubaum D.M."/>
            <person name="Park M."/>
            <person name="Tram U.K."/>
        </authorList>
    </citation>
    <scope>SEQUENCE REVISION TO N-TERMINUS AND C-TERMINUS</scope>
</reference>
<reference evidence="5" key="3">
    <citation type="journal article" date="2000" name="Science">
        <title>The genome sequence of Drosophila melanogaster.</title>
        <authorList>
            <person name="Adams M.D."/>
            <person name="Celniker S.E."/>
            <person name="Holt R.A."/>
            <person name="Evans C.A."/>
            <person name="Gocayne J.D."/>
            <person name="Amanatides P.G."/>
            <person name="Scherer S.E."/>
            <person name="Li P.W."/>
            <person name="Hoskins R.A."/>
            <person name="Galle R.F."/>
            <person name="George R.A."/>
            <person name="Lewis S.E."/>
            <person name="Richards S."/>
            <person name="Ashburner M."/>
            <person name="Henderson S.N."/>
            <person name="Sutton G.G."/>
            <person name="Wortman J.R."/>
            <person name="Yandell M.D."/>
            <person name="Zhang Q."/>
            <person name="Chen L.X."/>
            <person name="Brandon R.C."/>
            <person name="Rogers Y.-H.C."/>
            <person name="Blazej R.G."/>
            <person name="Champe M."/>
            <person name="Pfeiffer B.D."/>
            <person name="Wan K.H."/>
            <person name="Doyle C."/>
            <person name="Baxter E.G."/>
            <person name="Helt G."/>
            <person name="Nelson C.R."/>
            <person name="Miklos G.L.G."/>
            <person name="Abril J.F."/>
            <person name="Agbayani A."/>
            <person name="An H.-J."/>
            <person name="Andrews-Pfannkoch C."/>
            <person name="Baldwin D."/>
            <person name="Ballew R.M."/>
            <person name="Basu A."/>
            <person name="Baxendale J."/>
            <person name="Bayraktaroglu L."/>
            <person name="Beasley E.M."/>
            <person name="Beeson K.Y."/>
            <person name="Benos P.V."/>
            <person name="Berman B.P."/>
            <person name="Bhandari D."/>
            <person name="Bolshakov S."/>
            <person name="Borkova D."/>
            <person name="Botchan M.R."/>
            <person name="Bouck J."/>
            <person name="Brokstein P."/>
            <person name="Brottier P."/>
            <person name="Burtis K.C."/>
            <person name="Busam D.A."/>
            <person name="Butler H."/>
            <person name="Cadieu E."/>
            <person name="Center A."/>
            <person name="Chandra I."/>
            <person name="Cherry J.M."/>
            <person name="Cawley S."/>
            <person name="Dahlke C."/>
            <person name="Davenport L.B."/>
            <person name="Davies P."/>
            <person name="de Pablos B."/>
            <person name="Delcher A."/>
            <person name="Deng Z."/>
            <person name="Mays A.D."/>
            <person name="Dew I."/>
            <person name="Dietz S.M."/>
            <person name="Dodson K."/>
            <person name="Doup L.E."/>
            <person name="Downes M."/>
            <person name="Dugan-Rocha S."/>
            <person name="Dunkov B.C."/>
            <person name="Dunn P."/>
            <person name="Durbin K.J."/>
            <person name="Evangelista C.C."/>
            <person name="Ferraz C."/>
            <person name="Ferriera S."/>
            <person name="Fleischmann W."/>
            <person name="Fosler C."/>
            <person name="Gabrielian A.E."/>
            <person name="Garg N.S."/>
            <person name="Gelbart W.M."/>
            <person name="Glasser K."/>
            <person name="Glodek A."/>
            <person name="Gong F."/>
            <person name="Gorrell J.H."/>
            <person name="Gu Z."/>
            <person name="Guan P."/>
            <person name="Harris M."/>
            <person name="Harris N.L."/>
            <person name="Harvey D.A."/>
            <person name="Heiman T.J."/>
            <person name="Hernandez J.R."/>
            <person name="Houck J."/>
            <person name="Hostin D."/>
            <person name="Houston K.A."/>
            <person name="Howland T.J."/>
            <person name="Wei M.-H."/>
            <person name="Ibegwam C."/>
            <person name="Jalali M."/>
            <person name="Kalush F."/>
            <person name="Karpen G.H."/>
            <person name="Ke Z."/>
            <person name="Kennison J.A."/>
            <person name="Ketchum K.A."/>
            <person name="Kimmel B.E."/>
            <person name="Kodira C.D."/>
            <person name="Kraft C.L."/>
            <person name="Kravitz S."/>
            <person name="Kulp D."/>
            <person name="Lai Z."/>
            <person name="Lasko P."/>
            <person name="Lei Y."/>
            <person name="Levitsky A.A."/>
            <person name="Li J.H."/>
            <person name="Li Z."/>
            <person name="Liang Y."/>
            <person name="Lin X."/>
            <person name="Liu X."/>
            <person name="Mattei B."/>
            <person name="McIntosh T.C."/>
            <person name="McLeod M.P."/>
            <person name="McPherson D."/>
            <person name="Merkulov G."/>
            <person name="Milshina N.V."/>
            <person name="Mobarry C."/>
            <person name="Morris J."/>
            <person name="Moshrefi A."/>
            <person name="Mount S.M."/>
            <person name="Moy M."/>
            <person name="Murphy B."/>
            <person name="Murphy L."/>
            <person name="Muzny D.M."/>
            <person name="Nelson D.L."/>
            <person name="Nelson D.R."/>
            <person name="Nelson K.A."/>
            <person name="Nixon K."/>
            <person name="Nusskern D.R."/>
            <person name="Pacleb J.M."/>
            <person name="Palazzolo M."/>
            <person name="Pittman G.S."/>
            <person name="Pan S."/>
            <person name="Pollard J."/>
            <person name="Puri V."/>
            <person name="Reese M.G."/>
            <person name="Reinert K."/>
            <person name="Remington K."/>
            <person name="Saunders R.D.C."/>
            <person name="Scheeler F."/>
            <person name="Shen H."/>
            <person name="Shue B.C."/>
            <person name="Siden-Kiamos I."/>
            <person name="Simpson M."/>
            <person name="Skupski M.P."/>
            <person name="Smith T.J."/>
            <person name="Spier E."/>
            <person name="Spradling A.C."/>
            <person name="Stapleton M."/>
            <person name="Strong R."/>
            <person name="Sun E."/>
            <person name="Svirskas R."/>
            <person name="Tector C."/>
            <person name="Turner R."/>
            <person name="Venter E."/>
            <person name="Wang A.H."/>
            <person name="Wang X."/>
            <person name="Wang Z.-Y."/>
            <person name="Wassarman D.A."/>
            <person name="Weinstock G.M."/>
            <person name="Weissenbach J."/>
            <person name="Williams S.M."/>
            <person name="Woodage T."/>
            <person name="Worley K.C."/>
            <person name="Wu D."/>
            <person name="Yang S."/>
            <person name="Yao Q.A."/>
            <person name="Ye J."/>
            <person name="Yeh R.-F."/>
            <person name="Zaveri J.S."/>
            <person name="Zhan M."/>
            <person name="Zhang G."/>
            <person name="Zhao Q."/>
            <person name="Zheng L."/>
            <person name="Zheng X.H."/>
            <person name="Zhong F.N."/>
            <person name="Zhong W."/>
            <person name="Zhou X."/>
            <person name="Zhu S.C."/>
            <person name="Zhu X."/>
            <person name="Smith H.O."/>
            <person name="Gibbs R.A."/>
            <person name="Myers E.W."/>
            <person name="Rubin G.M."/>
            <person name="Venter J.C."/>
        </authorList>
    </citation>
    <scope>NUCLEOTIDE SEQUENCE [LARGE SCALE GENOMIC DNA]</scope>
    <source>
        <strain>Berkeley</strain>
    </source>
</reference>
<reference key="4">
    <citation type="journal article" date="2002" name="Genome Biol.">
        <title>Annotation of the Drosophila melanogaster euchromatic genome: a systematic review.</title>
        <authorList>
            <person name="Misra S."/>
            <person name="Crosby M.A."/>
            <person name="Mungall C.J."/>
            <person name="Matthews B.B."/>
            <person name="Campbell K.S."/>
            <person name="Hradecky P."/>
            <person name="Huang Y."/>
            <person name="Kaminker J.S."/>
            <person name="Millburn G.H."/>
            <person name="Prochnik S.E."/>
            <person name="Smith C.D."/>
            <person name="Tupy J.L."/>
            <person name="Whitfield E.J."/>
            <person name="Bayraktaroglu L."/>
            <person name="Berman B.P."/>
            <person name="Bettencourt B.R."/>
            <person name="Celniker S.E."/>
            <person name="de Grey A.D.N.J."/>
            <person name="Drysdale R.A."/>
            <person name="Harris N.L."/>
            <person name="Richter J."/>
            <person name="Russo S."/>
            <person name="Schroeder A.J."/>
            <person name="Shu S.Q."/>
            <person name="Stapleton M."/>
            <person name="Yamada C."/>
            <person name="Ashburner M."/>
            <person name="Gelbart W.M."/>
            <person name="Rubin G.M."/>
            <person name="Lewis S.E."/>
        </authorList>
    </citation>
    <scope>GENOME REANNOTATION</scope>
    <source>
        <strain>Berkeley</strain>
    </source>
</reference>
<reference key="5">
    <citation type="journal article" date="2002" name="Genome Biol.">
        <title>A Drosophila full-length cDNA resource.</title>
        <authorList>
            <person name="Stapleton M."/>
            <person name="Carlson J.W."/>
            <person name="Brokstein P."/>
            <person name="Yu C."/>
            <person name="Champe M."/>
            <person name="George R.A."/>
            <person name="Guarin H."/>
            <person name="Kronmiller B."/>
            <person name="Pacleb J.M."/>
            <person name="Park S."/>
            <person name="Wan K.H."/>
            <person name="Rubin G.M."/>
            <person name="Celniker S.E."/>
        </authorList>
    </citation>
    <scope>NUCLEOTIDE SEQUENCE [LARGE SCALE MRNA]</scope>
    <source>
        <strain>Berkeley</strain>
        <tissue>Head</tissue>
    </source>
</reference>
<reference evidence="5" key="6">
    <citation type="journal article" date="2000" name="Genetics">
        <title>Molecular population genetics of male accessory gland proteins in Drosophila.</title>
        <authorList>
            <person name="Begun D.J."/>
            <person name="Whitley P."/>
            <person name="Todd B.L."/>
            <person name="Waldrip-Dail H.M."/>
            <person name="Clark A.G."/>
        </authorList>
    </citation>
    <scope>NUCLEOTIDE SEQUENCE OF 144-889</scope>
    <source>
        <strain>SENGWA2</strain>
        <strain>SENGWA22</strain>
        <strain>SENGWA29</strain>
        <strain>SENGWA30</strain>
        <strain>SENGWA32</strain>
        <strain>SENGWA37</strain>
        <strain>SENGWA51</strain>
        <strain>WSII1</strain>
        <strain>WSII12</strain>
        <strain>WSII16</strain>
        <strain>WSII19</strain>
        <strain>WSII26</strain>
        <strain>WSII47</strain>
        <strain>WSII49</strain>
        <strain>WSII6</strain>
        <strain>WSII9</strain>
    </source>
</reference>
<reference evidence="5" key="7">
    <citation type="journal article" date="2000" name="Science">
        <title>A Drosophila complementary DNA resource.</title>
        <authorList>
            <person name="Rubin G.M."/>
            <person name="Hong L."/>
            <person name="Brokstein P."/>
            <person name="Evans-Holm M."/>
            <person name="Frise E."/>
            <person name="Stapleton M."/>
            <person name="Harvey D.A."/>
        </authorList>
    </citation>
    <scope>NUCLEOTIDE SEQUENCE [LARGE SCALE MRNA] OF 401-912</scope>
    <source>
        <strain>Berkeley</strain>
        <tissue>Head</tissue>
    </source>
</reference>
<reference key="8">
    <citation type="journal article" date="2003" name="J. Exp. Biol.">
        <title>An early role for the Drosophila melanogaster male seminal protein Acp36DE in female sperm storage.</title>
        <authorList>
            <person name="Bloch-Qazi M.C."/>
            <person name="Wolfner M.F."/>
        </authorList>
    </citation>
    <scope>FUNCTION</scope>
</reference>
<reference key="9">
    <citation type="journal article" date="2014" name="Genetics">
        <title>A Drosophila protease cascade member, seminal metalloprotease-1, is activated stepwise by male factors and requires female factors for full activity.</title>
        <authorList>
            <person name="Laflamme B.A."/>
            <person name="Avila F.W."/>
            <person name="Michalski K."/>
            <person name="Wolfner M.F."/>
        </authorList>
    </citation>
    <scope>TISSUE SPECIFICITY</scope>
    <scope>PROTEOLYTIC PROCESSING BY SEMP1</scope>
</reference>
<accession>Q9V3R1</accession>
<accession>O46198</accession>
<accession>Q9U9Y5</accession>
<name>A36DE_DROME</name>
<evidence type="ECO:0000256" key="1">
    <source>
        <dbReference type="SAM" id="MobiDB-lite"/>
    </source>
</evidence>
<evidence type="ECO:0000269" key="2">
    <source>
    </source>
</evidence>
<evidence type="ECO:0000269" key="3">
    <source>
    </source>
</evidence>
<evidence type="ECO:0000269" key="4">
    <source>
    </source>
</evidence>
<evidence type="ECO:0000305" key="5"/>
<evidence type="ECO:0000312" key="6">
    <source>
        <dbReference type="EMBL" id="AAG37359.1"/>
    </source>
</evidence>
<evidence type="ECO:0000312" key="7">
    <source>
        <dbReference type="EMBL" id="AAM29349.1"/>
    </source>
</evidence>
<keyword id="KW-0085">Behavior</keyword>
<keyword id="KW-1185">Reference proteome</keyword>
<keyword id="KW-0964">Secreted</keyword>
<keyword id="KW-0732">Signal</keyword>
<dbReference type="EMBL" id="U85759">
    <property type="protein sequence ID" value="AAB96383.2"/>
    <property type="molecule type" value="mRNA"/>
</dbReference>
<dbReference type="EMBL" id="AF157488">
    <property type="protein sequence ID" value="AAD40185.1"/>
    <property type="molecule type" value="Genomic_DNA"/>
</dbReference>
<dbReference type="EMBL" id="AE014134">
    <property type="protein sequence ID" value="AAF53664.1"/>
    <property type="molecule type" value="Genomic_DNA"/>
</dbReference>
<dbReference type="EMBL" id="AY113344">
    <property type="protein sequence ID" value="AAM29349.1"/>
    <property type="molecule type" value="mRNA"/>
</dbReference>
<dbReference type="EMBL" id="AY010577">
    <property type="protein sequence ID" value="AAG37359.1"/>
    <property type="molecule type" value="Genomic_DNA"/>
</dbReference>
<dbReference type="EMBL" id="AY010578">
    <property type="protein sequence ID" value="AAG37360.1"/>
    <property type="molecule type" value="Genomic_DNA"/>
</dbReference>
<dbReference type="EMBL" id="AY010579">
    <property type="protein sequence ID" value="AAG37361.1"/>
    <property type="molecule type" value="Genomic_DNA"/>
</dbReference>
<dbReference type="EMBL" id="AY010580">
    <property type="protein sequence ID" value="AAG37362.1"/>
    <property type="molecule type" value="Genomic_DNA"/>
</dbReference>
<dbReference type="EMBL" id="AY010581">
    <property type="protein sequence ID" value="AAG37363.1"/>
    <property type="molecule type" value="Genomic_DNA"/>
</dbReference>
<dbReference type="EMBL" id="AY010582">
    <property type="protein sequence ID" value="AAG37364.1"/>
    <property type="molecule type" value="Genomic_DNA"/>
</dbReference>
<dbReference type="EMBL" id="AY010583">
    <property type="protein sequence ID" value="AAG37365.1"/>
    <property type="molecule type" value="Genomic_DNA"/>
</dbReference>
<dbReference type="EMBL" id="AY010584">
    <property type="protein sequence ID" value="AAG37366.1"/>
    <property type="molecule type" value="Genomic_DNA"/>
</dbReference>
<dbReference type="EMBL" id="AY010585">
    <property type="protein sequence ID" value="AAG37367.1"/>
    <property type="molecule type" value="Genomic_DNA"/>
</dbReference>
<dbReference type="EMBL" id="AY010586">
    <property type="protein sequence ID" value="AAG37368.1"/>
    <property type="molecule type" value="Genomic_DNA"/>
</dbReference>
<dbReference type="EMBL" id="AY010587">
    <property type="protein sequence ID" value="AAG37369.1"/>
    <property type="molecule type" value="Genomic_DNA"/>
</dbReference>
<dbReference type="EMBL" id="AY010588">
    <property type="protein sequence ID" value="AAG37370.1"/>
    <property type="molecule type" value="Genomic_DNA"/>
</dbReference>
<dbReference type="EMBL" id="AY010589">
    <property type="protein sequence ID" value="AAG37371.1"/>
    <property type="molecule type" value="Genomic_DNA"/>
</dbReference>
<dbReference type="EMBL" id="AY010590">
    <property type="protein sequence ID" value="AAG37372.1"/>
    <property type="molecule type" value="Genomic_DNA"/>
</dbReference>
<dbReference type="EMBL" id="AY010591">
    <property type="protein sequence ID" value="AAG37373.1"/>
    <property type="molecule type" value="Genomic_DNA"/>
</dbReference>
<dbReference type="EMBL" id="AY010592">
    <property type="protein sequence ID" value="AAG37374.1"/>
    <property type="molecule type" value="Genomic_DNA"/>
</dbReference>
<dbReference type="EMBL" id="AF145666">
    <property type="protein sequence ID" value="AAD38641.1"/>
    <property type="molecule type" value="mRNA"/>
</dbReference>
<dbReference type="RefSeq" id="NP_001286040.1">
    <property type="nucleotide sequence ID" value="NM_001299111.2"/>
</dbReference>
<dbReference type="RefSeq" id="NP_523594.1">
    <property type="nucleotide sequence ID" value="NM_078870.4"/>
</dbReference>
<dbReference type="BioGRID" id="61091">
    <property type="interactions" value="2"/>
</dbReference>
<dbReference type="DIP" id="DIP-24017N"/>
<dbReference type="FunCoup" id="Q9V3R1">
    <property type="interactions" value="51"/>
</dbReference>
<dbReference type="IntAct" id="Q9V3R1">
    <property type="interactions" value="8"/>
</dbReference>
<dbReference type="MINT" id="Q9V3R1"/>
<dbReference type="STRING" id="7227.FBpp0309468"/>
<dbReference type="PaxDb" id="7227-FBpp0080607"/>
<dbReference type="EnsemblMetazoa" id="FBtr0081054">
    <property type="protein sequence ID" value="FBpp0080607"/>
    <property type="gene ID" value="FBgn0011559"/>
</dbReference>
<dbReference type="EnsemblMetazoa" id="FBtr0340581">
    <property type="protein sequence ID" value="FBpp0309468"/>
    <property type="gene ID" value="FBgn0011559"/>
</dbReference>
<dbReference type="GeneID" id="35096"/>
<dbReference type="KEGG" id="dme:Dmel_CG7157"/>
<dbReference type="AGR" id="FB:FBgn0011559"/>
<dbReference type="CTD" id="35096"/>
<dbReference type="FlyBase" id="FBgn0011559">
    <property type="gene designation" value="Acp36DE"/>
</dbReference>
<dbReference type="VEuPathDB" id="VectorBase:FBgn0011559"/>
<dbReference type="HOGENOM" id="CLU_357253_0_0_1"/>
<dbReference type="InParanoid" id="Q9V3R1"/>
<dbReference type="OMA" id="CFRKNIE"/>
<dbReference type="OrthoDB" id="7873234at2759"/>
<dbReference type="PhylomeDB" id="Q9V3R1"/>
<dbReference type="SignaLink" id="Q9V3R1"/>
<dbReference type="BioGRID-ORCS" id="35096">
    <property type="hits" value="0 hits in 1 CRISPR screen"/>
</dbReference>
<dbReference type="GenomeRNAi" id="35096"/>
<dbReference type="PRO" id="PR:Q9V3R1"/>
<dbReference type="Proteomes" id="UP000000803">
    <property type="component" value="Chromosome 2L"/>
</dbReference>
<dbReference type="Bgee" id="FBgn0011559">
    <property type="expression patterns" value="Expressed in male accessory gland main cell (Drosophila) in male reproductive gland and 68 other cell types or tissues"/>
</dbReference>
<dbReference type="ExpressionAtlas" id="Q9V3R1">
    <property type="expression patterns" value="baseline and differential"/>
</dbReference>
<dbReference type="GO" id="GO:0005576">
    <property type="term" value="C:extracellular region"/>
    <property type="evidence" value="ECO:0000255"/>
    <property type="project" value="FlyBase"/>
</dbReference>
<dbReference type="GO" id="GO:0005615">
    <property type="term" value="C:extracellular space"/>
    <property type="evidence" value="ECO:0000314"/>
    <property type="project" value="FlyBase"/>
</dbReference>
<dbReference type="GO" id="GO:0005179">
    <property type="term" value="F:hormone activity"/>
    <property type="evidence" value="ECO:0000303"/>
    <property type="project" value="UniProtKB"/>
</dbReference>
<dbReference type="GO" id="GO:0042628">
    <property type="term" value="P:mating plug formation"/>
    <property type="evidence" value="ECO:0000304"/>
    <property type="project" value="FlyBase"/>
</dbReference>
<dbReference type="GO" id="GO:0045434">
    <property type="term" value="P:negative regulation of female receptivity, post-mating"/>
    <property type="evidence" value="ECO:0000303"/>
    <property type="project" value="UniProtKB"/>
</dbReference>
<dbReference type="GO" id="GO:0019953">
    <property type="term" value="P:sexual reproduction"/>
    <property type="evidence" value="ECO:0000270"/>
    <property type="project" value="FlyBase"/>
</dbReference>
<dbReference type="GO" id="GO:0046692">
    <property type="term" value="P:sperm competition"/>
    <property type="evidence" value="ECO:0000314"/>
    <property type="project" value="FlyBase"/>
</dbReference>
<dbReference type="GO" id="GO:0046693">
    <property type="term" value="P:sperm storage"/>
    <property type="evidence" value="ECO:0000315"/>
    <property type="project" value="FlyBase"/>
</dbReference>
<dbReference type="InterPro" id="IPR006595">
    <property type="entry name" value="CTLH_C"/>
</dbReference>
<proteinExistence type="evidence at protein level"/>
<organism evidence="6">
    <name type="scientific">Drosophila melanogaster</name>
    <name type="common">Fruit fly</name>
    <dbReference type="NCBI Taxonomy" id="7227"/>
    <lineage>
        <taxon>Eukaryota</taxon>
        <taxon>Metazoa</taxon>
        <taxon>Ecdysozoa</taxon>
        <taxon>Arthropoda</taxon>
        <taxon>Hexapoda</taxon>
        <taxon>Insecta</taxon>
        <taxon>Pterygota</taxon>
        <taxon>Neoptera</taxon>
        <taxon>Endopterygota</taxon>
        <taxon>Diptera</taxon>
        <taxon>Brachycera</taxon>
        <taxon>Muscomorpha</taxon>
        <taxon>Ephydroidea</taxon>
        <taxon>Drosophilidae</taxon>
        <taxon>Drosophila</taxon>
        <taxon>Sophophora</taxon>
    </lineage>
</organism>
<sequence length="912" mass="101921">MWTLTCQQFIALILLGTLVPSESFLCKHCFRKNLEKVHESFRDILSPPIFGVNPQPLIEVQQPKVTPKPESSQVIHVHQPQVILKPIYYPKVDTISTKNQIGIHGPYSQYPSLLPSANLLGIPNQQLINAQDVLSDKDQKQTQVQNNNLHIRFGVSALREGRNNPSLETISRDKVDKISPALQLQLLRYADSQSQSQTQSQSASQSESNASSQFQAQEQSNRLLENPPVSESQSQSESQSQSESQKQSQSQSQRQQQIQTQLQILRQLQQKSNEQSAAQSASQIQSQRQSDSQSNLQLQEQSQSQSEQGKPIQSQIQILQGLQQKELDDKSASQSQSESKTRQEQQKQLNLQQLEELSSSLSQSRLGLGQQIQSQLQKNQLDKQFASQFQSQSKSQLEQQMQLQLQSLRQLQQKQLDEQSASQSQPQSQVAQQIQSHLQLLRLLQSRLKTQSALKSDLEQQILLQLKKLTEVQQKQLAEQPTLRPSSKSQSPGQLEQQILLQLQNLLQFQQNQLKSDTQTQSQLQESKSNSLSQSQSQSQEQLQLQRDQNLRQLEQIKLEMQNIRELLQKGKSELQTQSDSQRRIHELYQNILQLNKEKLSYQLKQLKLKELEDQKKSQAEISKGSNPSNLFIIGQLPSEGKPAPGNQGPSIEPKLVPQPGSLDKLPSGGGLIGKPASTGLYILSPDFNDLSDYRDQFRLQQELKKHQNILSLLQRRQNDIKKQQNAQLLLGQQQKEQQAQESINKQQSSSAGSSSQTKLQQDIQSTGAQGSQQGLQAGSTGLQTSSLQGTESSASQSAALQRLKEQEQLRIQTENDQKTSSSSSHSNSQNSQSSSSQSSQASQSEAQRQEAGNRNTLLLDQSSSKTQSESKSESSSQSSSHSSSQSTSNSSSNVQSKLQGESQALLNNLSG</sequence>
<gene>
    <name type="primary">Acp36DE</name>
    <name type="ORF">CG7157</name>
</gene>